<proteinExistence type="evidence at transcript level"/>
<gene>
    <name type="primary">ERF5</name>
    <name type="synonym">ERF-5</name>
    <name type="synonym">ERF102</name>
    <name type="ordered locus">At5g47230</name>
    <name type="ORF">MQL5_9</name>
</gene>
<feature type="chain" id="PRO_0000112563" description="Ethylene-responsive transcription factor 5">
    <location>
        <begin position="1"/>
        <end position="300"/>
    </location>
</feature>
<feature type="DNA-binding region" description="AP2/ERF" evidence="2">
    <location>
        <begin position="155"/>
        <end position="213"/>
    </location>
</feature>
<feature type="region of interest" description="Disordered" evidence="3">
    <location>
        <begin position="28"/>
        <end position="48"/>
    </location>
</feature>
<feature type="compositionally biased region" description="Low complexity" evidence="3">
    <location>
        <begin position="35"/>
        <end position="48"/>
    </location>
</feature>
<protein>
    <recommendedName>
        <fullName>Ethylene-responsive transcription factor 5</fullName>
        <shortName>AtERF5</shortName>
    </recommendedName>
    <alternativeName>
        <fullName>Ethylene-responsive element-binding factor 5</fullName>
        <shortName>EREBP-5</shortName>
    </alternativeName>
</protein>
<sequence length="300" mass="33810">MATPNEVSALWFIEKHLLDEASPVATDPWMKHESSSATESSSDSSSIIFGSSSSSFAPIDFSESVCKPEIIDLDTPRSMEFLSIPFEFDSEVSVSDFDFKPSNQNQNQFEPELKSQIRKPPLKISLPAKTEWIQFAAENTKPEVTKPVSEEEKKHYRGVRQRPWGKFAAEIRDPNKRGSRVWLGTFDTAIEAARAYDEAAFRLRGSKAILNFPLEVGKWKPRADEGEKKRKRDDDEKVTVVEKVLKTEQSVDVNGGETFPFVTSNLTELCDWDLTGFLNFPLLSPLSPHPPFGYSQLTVV</sequence>
<dbReference type="EMBL" id="AB008107">
    <property type="protein sequence ID" value="BAA32422.1"/>
    <property type="molecule type" value="mRNA"/>
</dbReference>
<dbReference type="EMBL" id="AB018117">
    <property type="protein sequence ID" value="BAA97157.1"/>
    <property type="status" value="ALT_SEQ"/>
    <property type="molecule type" value="Genomic_DNA"/>
</dbReference>
<dbReference type="EMBL" id="CP002688">
    <property type="protein sequence ID" value="AED95489.1"/>
    <property type="molecule type" value="Genomic_DNA"/>
</dbReference>
<dbReference type="EMBL" id="AK117568">
    <property type="protein sequence ID" value="BAC42229.1"/>
    <property type="molecule type" value="mRNA"/>
</dbReference>
<dbReference type="EMBL" id="AF385709">
    <property type="protein sequence ID" value="AAK60301.1"/>
    <property type="molecule type" value="mRNA"/>
</dbReference>
<dbReference type="EMBL" id="AY078014">
    <property type="protein sequence ID" value="AAL77715.1"/>
    <property type="molecule type" value="mRNA"/>
</dbReference>
<dbReference type="PIR" id="T52020">
    <property type="entry name" value="T52020"/>
</dbReference>
<dbReference type="RefSeq" id="NP_568679.1">
    <property type="nucleotide sequence ID" value="NM_124094.3"/>
</dbReference>
<dbReference type="SMR" id="O80341"/>
<dbReference type="BioGRID" id="20018">
    <property type="interactions" value="6"/>
</dbReference>
<dbReference type="FunCoup" id="O80341">
    <property type="interactions" value="44"/>
</dbReference>
<dbReference type="IntAct" id="O80341">
    <property type="interactions" value="3"/>
</dbReference>
<dbReference type="STRING" id="3702.O80341"/>
<dbReference type="PaxDb" id="3702-AT5G47230.1"/>
<dbReference type="EnsemblPlants" id="AT5G47230.1">
    <property type="protein sequence ID" value="AT5G47230.1"/>
    <property type="gene ID" value="AT5G47230"/>
</dbReference>
<dbReference type="GeneID" id="834770"/>
<dbReference type="Gramene" id="AT5G47230.1">
    <property type="protein sequence ID" value="AT5G47230.1"/>
    <property type="gene ID" value="AT5G47230"/>
</dbReference>
<dbReference type="KEGG" id="ath:AT5G47230"/>
<dbReference type="Araport" id="AT5G47230"/>
<dbReference type="TAIR" id="AT5G47230">
    <property type="gene designation" value="ERF5"/>
</dbReference>
<dbReference type="eggNOG" id="ENOG502RXE3">
    <property type="taxonomic scope" value="Eukaryota"/>
</dbReference>
<dbReference type="HOGENOM" id="CLU_058713_0_1_1"/>
<dbReference type="InParanoid" id="O80341"/>
<dbReference type="OMA" id="KTQIPCA"/>
<dbReference type="PhylomeDB" id="O80341"/>
<dbReference type="PRO" id="PR:O80341"/>
<dbReference type="Proteomes" id="UP000006548">
    <property type="component" value="Chromosome 5"/>
</dbReference>
<dbReference type="ExpressionAtlas" id="O80341">
    <property type="expression patterns" value="baseline and differential"/>
</dbReference>
<dbReference type="GO" id="GO:0005634">
    <property type="term" value="C:nucleus"/>
    <property type="evidence" value="ECO:0000314"/>
    <property type="project" value="TAIR"/>
</dbReference>
<dbReference type="GO" id="GO:0003700">
    <property type="term" value="F:DNA-binding transcription factor activity"/>
    <property type="evidence" value="ECO:0000250"/>
    <property type="project" value="TAIR"/>
</dbReference>
<dbReference type="GO" id="GO:0000976">
    <property type="term" value="F:transcription cis-regulatory region binding"/>
    <property type="evidence" value="ECO:0000353"/>
    <property type="project" value="TAIR"/>
</dbReference>
<dbReference type="GO" id="GO:0006952">
    <property type="term" value="P:defense response"/>
    <property type="evidence" value="ECO:0007669"/>
    <property type="project" value="UniProtKB-KW"/>
</dbReference>
<dbReference type="GO" id="GO:0009873">
    <property type="term" value="P:ethylene-activated signaling pathway"/>
    <property type="evidence" value="ECO:0000304"/>
    <property type="project" value="TAIR"/>
</dbReference>
<dbReference type="GO" id="GO:0009733">
    <property type="term" value="P:response to auxin"/>
    <property type="evidence" value="ECO:0000270"/>
    <property type="project" value="TAIR"/>
</dbReference>
<dbReference type="GO" id="GO:0009409">
    <property type="term" value="P:response to cold"/>
    <property type="evidence" value="ECO:0000270"/>
    <property type="project" value="TAIR"/>
</dbReference>
<dbReference type="CDD" id="cd00018">
    <property type="entry name" value="AP2"/>
    <property type="match status" value="1"/>
</dbReference>
<dbReference type="FunFam" id="3.30.730.10:FF:000001">
    <property type="entry name" value="Ethylene-responsive transcription factor 2"/>
    <property type="match status" value="1"/>
</dbReference>
<dbReference type="Gene3D" id="3.30.730.10">
    <property type="entry name" value="AP2/ERF domain"/>
    <property type="match status" value="1"/>
</dbReference>
<dbReference type="InterPro" id="IPR001471">
    <property type="entry name" value="AP2/ERF_dom"/>
</dbReference>
<dbReference type="InterPro" id="IPR036955">
    <property type="entry name" value="AP2/ERF_dom_sf"/>
</dbReference>
<dbReference type="InterPro" id="IPR016177">
    <property type="entry name" value="DNA-bd_dom_sf"/>
</dbReference>
<dbReference type="InterPro" id="IPR044808">
    <property type="entry name" value="ERF_plant"/>
</dbReference>
<dbReference type="PANTHER" id="PTHR31190">
    <property type="entry name" value="DNA-BINDING DOMAIN"/>
    <property type="match status" value="1"/>
</dbReference>
<dbReference type="PANTHER" id="PTHR31190:SF499">
    <property type="entry name" value="ETHYLENE-RESPONSIVE TRANSCRIPTION FACTOR ERF105"/>
    <property type="match status" value="1"/>
</dbReference>
<dbReference type="Pfam" id="PF00847">
    <property type="entry name" value="AP2"/>
    <property type="match status" value="1"/>
</dbReference>
<dbReference type="PRINTS" id="PR00367">
    <property type="entry name" value="ETHRSPELEMNT"/>
</dbReference>
<dbReference type="SMART" id="SM00380">
    <property type="entry name" value="AP2"/>
    <property type="match status" value="1"/>
</dbReference>
<dbReference type="SUPFAM" id="SSF54171">
    <property type="entry name" value="DNA-binding domain"/>
    <property type="match status" value="1"/>
</dbReference>
<dbReference type="PROSITE" id="PS51032">
    <property type="entry name" value="AP2_ERF"/>
    <property type="match status" value="1"/>
</dbReference>
<name>EF102_ARATH</name>
<comment type="function">
    <text evidence="4 5">Acts as a transcriptional activator. Binds to the GCC-box pathogenesis-related promoter element. Involved in the regulation of gene expression by stress factors and by components of stress signal transduction pathways.</text>
</comment>
<comment type="subcellular location">
    <subcellularLocation>
        <location evidence="6">Nucleus</location>
    </subcellularLocation>
</comment>
<comment type="induction">
    <text evidence="4">Ethylene induction is completely dependent on a functional ETHYLENE-INSENSITIVE2 (EIN2). Wounding as well as cold stress induction does not require EIN2. Transcripts accumulate strongly in cycloheximide-treated plants, a protein synthesis inhibitor. Seems to not be influenced by jasmonate, Alternaria brassicicola, exogenous abscisic acid (ABA), cold, heat, NaCl or drought stress.</text>
</comment>
<comment type="domain">
    <text evidence="1">The AP2/ERF domain binds specifically to the 5'-GCCGCC-3' motif. The affinity of this binding is higher if the seventh amino-acid of this domain is basic (By similarity).</text>
</comment>
<comment type="similarity">
    <text evidence="6">Belongs to the AP2/ERF transcription factor family. ERF subfamily.</text>
</comment>
<comment type="sequence caution" evidence="6">
    <conflict type="erroneous gene model prediction">
        <sequence resource="EMBL-CDS" id="BAA97157"/>
    </conflict>
</comment>
<accession>O80341</accession>
<accession>Q9LVT6</accession>
<evidence type="ECO:0000250" key="1"/>
<evidence type="ECO:0000255" key="2">
    <source>
        <dbReference type="PROSITE-ProRule" id="PRU00366"/>
    </source>
</evidence>
<evidence type="ECO:0000256" key="3">
    <source>
        <dbReference type="SAM" id="MobiDB-lite"/>
    </source>
</evidence>
<evidence type="ECO:0000269" key="4">
    <source>
    </source>
</evidence>
<evidence type="ECO:0000269" key="5">
    <source>
    </source>
</evidence>
<evidence type="ECO:0000305" key="6"/>
<organism>
    <name type="scientific">Arabidopsis thaliana</name>
    <name type="common">Mouse-ear cress</name>
    <dbReference type="NCBI Taxonomy" id="3702"/>
    <lineage>
        <taxon>Eukaryota</taxon>
        <taxon>Viridiplantae</taxon>
        <taxon>Streptophyta</taxon>
        <taxon>Embryophyta</taxon>
        <taxon>Tracheophyta</taxon>
        <taxon>Spermatophyta</taxon>
        <taxon>Magnoliopsida</taxon>
        <taxon>eudicotyledons</taxon>
        <taxon>Gunneridae</taxon>
        <taxon>Pentapetalae</taxon>
        <taxon>rosids</taxon>
        <taxon>malvids</taxon>
        <taxon>Brassicales</taxon>
        <taxon>Brassicaceae</taxon>
        <taxon>Camelineae</taxon>
        <taxon>Arabidopsis</taxon>
    </lineage>
</organism>
<keyword id="KW-0010">Activator</keyword>
<keyword id="KW-0238">DNA-binding</keyword>
<keyword id="KW-0936">Ethylene signaling pathway</keyword>
<keyword id="KW-0539">Nucleus</keyword>
<keyword id="KW-0611">Plant defense</keyword>
<keyword id="KW-1185">Reference proteome</keyword>
<keyword id="KW-0804">Transcription</keyword>
<keyword id="KW-0805">Transcription regulation</keyword>
<reference key="1">
    <citation type="journal article" date="2000" name="Plant Cell">
        <title>Arabidopsis ethylene responsive element binding factors act as transcriptional activators or repressors of GCC box mediated gene expression.</title>
        <authorList>
            <person name="Fujimoto S.Y."/>
            <person name="Ohta M."/>
            <person name="Usui A."/>
            <person name="Shinshi H."/>
            <person name="Ohme-Takagi M."/>
        </authorList>
    </citation>
    <scope>NUCLEOTIDE SEQUENCE [MRNA]</scope>
    <scope>FUNCTION</scope>
    <scope>INDUCTION</scope>
</reference>
<reference key="2">
    <citation type="journal article" date="2000" name="DNA Res.">
        <title>Structural analysis of Arabidopsis thaliana chromosome 5. X. Sequence features of the regions of 3,076,755 bp covered by sixty P1 and TAC clones.</title>
        <authorList>
            <person name="Sato S."/>
            <person name="Nakamura Y."/>
            <person name="Kaneko T."/>
            <person name="Katoh T."/>
            <person name="Asamizu E."/>
            <person name="Kotani H."/>
            <person name="Tabata S."/>
        </authorList>
    </citation>
    <scope>NUCLEOTIDE SEQUENCE [LARGE SCALE GENOMIC DNA]</scope>
    <source>
        <strain>cv. Columbia</strain>
    </source>
</reference>
<reference key="3">
    <citation type="journal article" date="2017" name="Plant J.">
        <title>Araport11: a complete reannotation of the Arabidopsis thaliana reference genome.</title>
        <authorList>
            <person name="Cheng C.Y."/>
            <person name="Krishnakumar V."/>
            <person name="Chan A.P."/>
            <person name="Thibaud-Nissen F."/>
            <person name="Schobel S."/>
            <person name="Town C.D."/>
        </authorList>
    </citation>
    <scope>GENOME REANNOTATION</scope>
    <source>
        <strain>cv. Columbia</strain>
    </source>
</reference>
<reference key="4">
    <citation type="journal article" date="2002" name="Science">
        <title>Functional annotation of a full-length Arabidopsis cDNA collection.</title>
        <authorList>
            <person name="Seki M."/>
            <person name="Narusaka M."/>
            <person name="Kamiya A."/>
            <person name="Ishida J."/>
            <person name="Satou M."/>
            <person name="Sakurai T."/>
            <person name="Nakajima M."/>
            <person name="Enju A."/>
            <person name="Akiyama K."/>
            <person name="Oono Y."/>
            <person name="Muramatsu M."/>
            <person name="Hayashizaki Y."/>
            <person name="Kawai J."/>
            <person name="Carninci P."/>
            <person name="Itoh M."/>
            <person name="Ishii Y."/>
            <person name="Arakawa T."/>
            <person name="Shibata K."/>
            <person name="Shinagawa A."/>
            <person name="Shinozaki K."/>
        </authorList>
    </citation>
    <scope>NUCLEOTIDE SEQUENCE [LARGE SCALE MRNA]</scope>
    <source>
        <strain>cv. Columbia</strain>
    </source>
</reference>
<reference key="5">
    <citation type="journal article" date="2003" name="Science">
        <title>Empirical analysis of transcriptional activity in the Arabidopsis genome.</title>
        <authorList>
            <person name="Yamada K."/>
            <person name="Lim J."/>
            <person name="Dale J.M."/>
            <person name="Chen H."/>
            <person name="Shinn P."/>
            <person name="Palm C.J."/>
            <person name="Southwick A.M."/>
            <person name="Wu H.C."/>
            <person name="Kim C.J."/>
            <person name="Nguyen M."/>
            <person name="Pham P.K."/>
            <person name="Cheuk R.F."/>
            <person name="Karlin-Newmann G."/>
            <person name="Liu S.X."/>
            <person name="Lam B."/>
            <person name="Sakano H."/>
            <person name="Wu T."/>
            <person name="Yu G."/>
            <person name="Miranda M."/>
            <person name="Quach H.L."/>
            <person name="Tripp M."/>
            <person name="Chang C.H."/>
            <person name="Lee J.M."/>
            <person name="Toriumi M.J."/>
            <person name="Chan M.M."/>
            <person name="Tang C.C."/>
            <person name="Onodera C.S."/>
            <person name="Deng J.M."/>
            <person name="Akiyama K."/>
            <person name="Ansari Y."/>
            <person name="Arakawa T."/>
            <person name="Banh J."/>
            <person name="Banno F."/>
            <person name="Bowser L."/>
            <person name="Brooks S.Y."/>
            <person name="Carninci P."/>
            <person name="Chao Q."/>
            <person name="Choy N."/>
            <person name="Enju A."/>
            <person name="Goldsmith A.D."/>
            <person name="Gurjal M."/>
            <person name="Hansen N.F."/>
            <person name="Hayashizaki Y."/>
            <person name="Johnson-Hopson C."/>
            <person name="Hsuan V.W."/>
            <person name="Iida K."/>
            <person name="Karnes M."/>
            <person name="Khan S."/>
            <person name="Koesema E."/>
            <person name="Ishida J."/>
            <person name="Jiang P.X."/>
            <person name="Jones T."/>
            <person name="Kawai J."/>
            <person name="Kamiya A."/>
            <person name="Meyers C."/>
            <person name="Nakajima M."/>
            <person name="Narusaka M."/>
            <person name="Seki M."/>
            <person name="Sakurai T."/>
            <person name="Satou M."/>
            <person name="Tamse R."/>
            <person name="Vaysberg M."/>
            <person name="Wallender E.K."/>
            <person name="Wong C."/>
            <person name="Yamamura Y."/>
            <person name="Yuan S."/>
            <person name="Shinozaki K."/>
            <person name="Davis R.W."/>
            <person name="Theologis A."/>
            <person name="Ecker J.R."/>
        </authorList>
    </citation>
    <scope>NUCLEOTIDE SEQUENCE [LARGE SCALE MRNA]</scope>
    <source>
        <strain>cv. Columbia</strain>
    </source>
</reference>
<reference key="6">
    <citation type="journal article" date="1998" name="J. Biol. Chem.">
        <title>Unique mode of GCC box recognition by the DNA-binding domain of ethylene-responsive element-binding factor (ERF domain) in plant.</title>
        <authorList>
            <person name="Hao D."/>
            <person name="Ohme-Takagi M."/>
            <person name="Sarai A."/>
        </authorList>
    </citation>
    <scope>FUNCTION</scope>
</reference>
<reference key="7">
    <citation type="journal article" date="2006" name="Plant Physiol.">
        <title>Genome-wide analysis of the ERF gene family in Arabidopsis and rice.</title>
        <authorList>
            <person name="Nakano T."/>
            <person name="Suzuki K."/>
            <person name="Fujimura T."/>
            <person name="Shinshi H."/>
        </authorList>
    </citation>
    <scope>GENE FAMILY</scope>
    <scope>NOMENCLATURE</scope>
</reference>